<sequence length="557" mass="60352">MNYNDTTEFCFPFGQPSFPTSAMTEGSFDGQFSEFDPTFTSPADTALSDIANLPIDLHKDALFANAPGKGDVDFDSVSMLQLLSDYPLAFNSTENNQKLQTNPSARWSLLDSMDFDNQRQCSDLESAQLGDSGLLKSTILSNSHIDIAALSSSKTSEPTPPFSYVQTPCIPTPSSALIDTPFPGALDSEFGFDESQAPLFPASDGDCQRAFASISYPTNYGCKLSNLGFMSPQSPVKRELNDSTSPSKLSESSSSLTGSSSALLSQSEFLGSVPSLSDSIATVDPFFSFESFETDEKARSLLMDASLKLPQFSTPNLSSNSSSLSLKSTLAEGMKGSTPLAAVKTEKASKAARVMKQKKHREHVCFNCGVTETPLWRRTSDKLNFLCNACGLYNKQYGVMRPLSPRNKGSSKALENLVCANCSSTKTSLWRKDRHGQTVCNACGLYARLHGHNRPIGLKKNKITRRRRGKGPGGEDGMSDEVKSEFPVLSKSVTMAEILSSKGLESPQLTNSVSVSKMPNTDADVSLEHAKISFDSLDNSVIVKKEEEIENKFSVSC</sequence>
<evidence type="ECO:0000250" key="1">
    <source>
        <dbReference type="UniProtKB" id="P03069"/>
    </source>
</evidence>
<evidence type="ECO:0000255" key="2">
    <source>
        <dbReference type="PROSITE-ProRule" id="PRU00094"/>
    </source>
</evidence>
<evidence type="ECO:0000256" key="3">
    <source>
        <dbReference type="SAM" id="MobiDB-lite"/>
    </source>
</evidence>
<evidence type="ECO:0000269" key="4">
    <source>
    </source>
</evidence>
<evidence type="ECO:0000269" key="5">
    <source>
    </source>
</evidence>
<evidence type="ECO:0000303" key="6">
    <source>
    </source>
</evidence>
<evidence type="ECO:0000305" key="7"/>
<evidence type="ECO:0000305" key="8">
    <source>
    </source>
</evidence>
<evidence type="ECO:0000312" key="9">
    <source>
        <dbReference type="EMBL" id="CAB38164.1"/>
    </source>
</evidence>
<evidence type="ECO:0000312" key="10">
    <source>
        <dbReference type="PomBase" id="SPCC1393.08"/>
    </source>
</evidence>
<proteinExistence type="evidence at transcript level"/>
<keyword id="KW-0010">Activator</keyword>
<keyword id="KW-0963">Cytoplasm</keyword>
<keyword id="KW-0238">DNA-binding</keyword>
<keyword id="KW-0479">Metal-binding</keyword>
<keyword id="KW-0539">Nucleus</keyword>
<keyword id="KW-1185">Reference proteome</keyword>
<keyword id="KW-0677">Repeat</keyword>
<keyword id="KW-0804">Transcription</keyword>
<keyword id="KW-0805">Transcription regulation</keyword>
<keyword id="KW-0862">Zinc</keyword>
<keyword id="KW-0863">Zinc-finger</keyword>
<comment type="function">
    <text evidence="5">Activates genes required for amino acid biosynthesis and acts as a master transcriptional regulator during amino acid starvation (PubMed:29432178). Binds variations of the DNA sequence 5'-GAT[AC]GC-3' (PubMed:29432178).</text>
</comment>
<comment type="subcellular location">
    <subcellularLocation>
        <location evidence="4 8">Nucleus</location>
    </subcellularLocation>
    <subcellularLocation>
        <location evidence="4">Cytoplasm</location>
    </subcellularLocation>
</comment>
<comment type="induction">
    <text evidence="1 5">Translation is induced by amino acid starvation (PubMed:29432178). Translational repression during nutrient-rich conditions is dependent on several uORFs (upstream open reading frames) present in the 5'-UTR of the mRNA; these promote ribosome dissociation (PubMed:29432178). Translational induction occurs in conditions reducing translation machinery efficiency, leading to ribosomes scanning over the uORFs, and increased translation of the mRNA (By similarity).</text>
</comment>
<comment type="disruption phenotype">
    <text evidence="5">Decreases the mRNA level of genes involved in amino acid biosynthesis (PubMed:29432178). Increases the mRNA level of genes involved in the response to nitrogen starvation, including genes required for the mating response (PubMed:29432178). Decreases vegetative cell population growth rate in low nutrient conditions (PubMed:29432178).</text>
</comment>
<comment type="miscellaneous">
    <text evidence="6">Functional homolog of the S.cerevisiae GCN4 and mammalian ATF4 bZIP transcription factors.</text>
</comment>
<name>FIL1_SCHPO</name>
<dbReference type="EMBL" id="CU329672">
    <property type="protein sequence ID" value="CAB38164.1"/>
    <property type="molecule type" value="Genomic_DNA"/>
</dbReference>
<dbReference type="PIR" id="T40956">
    <property type="entry name" value="T40956"/>
</dbReference>
<dbReference type="RefSeq" id="NP_587966.1">
    <property type="nucleotide sequence ID" value="NM_001022957.2"/>
</dbReference>
<dbReference type="SMR" id="O94720"/>
<dbReference type="BioGRID" id="275462">
    <property type="interactions" value="71"/>
</dbReference>
<dbReference type="STRING" id="284812.O94720"/>
<dbReference type="iPTMnet" id="O94720"/>
<dbReference type="PaxDb" id="4896-SPCC1393.08.1"/>
<dbReference type="EnsemblFungi" id="SPCC1393.08.1">
    <property type="protein sequence ID" value="SPCC1393.08.1:pep"/>
    <property type="gene ID" value="SPCC1393.08"/>
</dbReference>
<dbReference type="GeneID" id="2538884"/>
<dbReference type="KEGG" id="spo:2538884"/>
<dbReference type="PomBase" id="SPCC1393.08">
    <property type="gene designation" value="fil1"/>
</dbReference>
<dbReference type="VEuPathDB" id="FungiDB:SPCC1393.08"/>
<dbReference type="eggNOG" id="KOG1601">
    <property type="taxonomic scope" value="Eukaryota"/>
</dbReference>
<dbReference type="HOGENOM" id="CLU_531163_0_0_1"/>
<dbReference type="InParanoid" id="O94720"/>
<dbReference type="Reactome" id="R-SPO-9018519">
    <property type="pathway name" value="Estrogen-dependent gene expression"/>
</dbReference>
<dbReference type="PRO" id="PR:O94720"/>
<dbReference type="Proteomes" id="UP000002485">
    <property type="component" value="Chromosome III"/>
</dbReference>
<dbReference type="GO" id="GO:0005829">
    <property type="term" value="C:cytosol"/>
    <property type="evidence" value="ECO:0007005"/>
    <property type="project" value="PomBase"/>
</dbReference>
<dbReference type="GO" id="GO:0005634">
    <property type="term" value="C:nucleus"/>
    <property type="evidence" value="ECO:0007005"/>
    <property type="project" value="PomBase"/>
</dbReference>
<dbReference type="GO" id="GO:0001228">
    <property type="term" value="F:DNA-binding transcription activator activity, RNA polymerase II-specific"/>
    <property type="evidence" value="ECO:0000314"/>
    <property type="project" value="PomBase"/>
</dbReference>
<dbReference type="GO" id="GO:0000981">
    <property type="term" value="F:DNA-binding transcription factor activity, RNA polymerase II-specific"/>
    <property type="evidence" value="ECO:0000318"/>
    <property type="project" value="GO_Central"/>
</dbReference>
<dbReference type="GO" id="GO:0000978">
    <property type="term" value="F:RNA polymerase II cis-regulatory region sequence-specific DNA binding"/>
    <property type="evidence" value="ECO:0000318"/>
    <property type="project" value="GO_Central"/>
</dbReference>
<dbReference type="GO" id="GO:0008270">
    <property type="term" value="F:zinc ion binding"/>
    <property type="evidence" value="ECO:0007669"/>
    <property type="project" value="UniProtKB-KW"/>
</dbReference>
<dbReference type="GO" id="GO:1904262">
    <property type="term" value="P:negative regulation of TORC1 signaling"/>
    <property type="evidence" value="ECO:0000315"/>
    <property type="project" value="PomBase"/>
</dbReference>
<dbReference type="GO" id="GO:0000122">
    <property type="term" value="P:negative regulation of transcription by RNA polymerase II"/>
    <property type="evidence" value="ECO:0000318"/>
    <property type="project" value="GO_Central"/>
</dbReference>
<dbReference type="GO" id="GO:0010508">
    <property type="term" value="P:positive regulation of autophagy"/>
    <property type="evidence" value="ECO:0000315"/>
    <property type="project" value="PomBase"/>
</dbReference>
<dbReference type="GO" id="GO:0045944">
    <property type="term" value="P:positive regulation of transcription by RNA polymerase II"/>
    <property type="evidence" value="ECO:0000315"/>
    <property type="project" value="PomBase"/>
</dbReference>
<dbReference type="CDD" id="cd00202">
    <property type="entry name" value="ZnF_GATA"/>
    <property type="match status" value="2"/>
</dbReference>
<dbReference type="FunFam" id="3.30.50.10:FF:000020">
    <property type="entry name" value="Zinc finger transcription factor Trps1"/>
    <property type="match status" value="1"/>
</dbReference>
<dbReference type="Gene3D" id="3.30.50.10">
    <property type="entry name" value="Erythroid Transcription Factor GATA-1, subunit A"/>
    <property type="match status" value="2"/>
</dbReference>
<dbReference type="InterPro" id="IPR039355">
    <property type="entry name" value="Transcription_factor_GATA"/>
</dbReference>
<dbReference type="InterPro" id="IPR000679">
    <property type="entry name" value="Znf_GATA"/>
</dbReference>
<dbReference type="InterPro" id="IPR013088">
    <property type="entry name" value="Znf_NHR/GATA"/>
</dbReference>
<dbReference type="PANTHER" id="PTHR10071:SF335">
    <property type="entry name" value="IRON-SENSING TRANSCRIPTIONAL REPRESSOR-RELATED"/>
    <property type="match status" value="1"/>
</dbReference>
<dbReference type="PANTHER" id="PTHR10071">
    <property type="entry name" value="TRANSCRIPTION FACTOR GATA FAMILY MEMBER"/>
    <property type="match status" value="1"/>
</dbReference>
<dbReference type="Pfam" id="PF00320">
    <property type="entry name" value="GATA"/>
    <property type="match status" value="2"/>
</dbReference>
<dbReference type="PRINTS" id="PR00619">
    <property type="entry name" value="GATAZNFINGER"/>
</dbReference>
<dbReference type="SMART" id="SM00401">
    <property type="entry name" value="ZnF_GATA"/>
    <property type="match status" value="2"/>
</dbReference>
<dbReference type="SUPFAM" id="SSF57716">
    <property type="entry name" value="Glucocorticoid receptor-like (DNA-binding domain)"/>
    <property type="match status" value="2"/>
</dbReference>
<dbReference type="PROSITE" id="PS00344">
    <property type="entry name" value="GATA_ZN_FINGER_1"/>
    <property type="match status" value="1"/>
</dbReference>
<dbReference type="PROSITE" id="PS50114">
    <property type="entry name" value="GATA_ZN_FINGER_2"/>
    <property type="match status" value="2"/>
</dbReference>
<reference evidence="9" key="1">
    <citation type="journal article" date="2002" name="Nature">
        <title>The genome sequence of Schizosaccharomyces pombe.</title>
        <authorList>
            <person name="Wood V."/>
            <person name="Gwilliam R."/>
            <person name="Rajandream M.A."/>
            <person name="Lyne M.H."/>
            <person name="Lyne R."/>
            <person name="Stewart A."/>
            <person name="Sgouros J.G."/>
            <person name="Peat N."/>
            <person name="Hayles J."/>
            <person name="Baker S.G."/>
            <person name="Basham D."/>
            <person name="Bowman S."/>
            <person name="Brooks K."/>
            <person name="Brown D."/>
            <person name="Brown S."/>
            <person name="Chillingworth T."/>
            <person name="Churcher C.M."/>
            <person name="Collins M."/>
            <person name="Connor R."/>
            <person name="Cronin A."/>
            <person name="Davis P."/>
            <person name="Feltwell T."/>
            <person name="Fraser A."/>
            <person name="Gentles S."/>
            <person name="Goble A."/>
            <person name="Hamlin N."/>
            <person name="Harris D.E."/>
            <person name="Hidalgo J."/>
            <person name="Hodgson G."/>
            <person name="Holroyd S."/>
            <person name="Hornsby T."/>
            <person name="Howarth S."/>
            <person name="Huckle E.J."/>
            <person name="Hunt S."/>
            <person name="Jagels K."/>
            <person name="James K.D."/>
            <person name="Jones L."/>
            <person name="Jones M."/>
            <person name="Leather S."/>
            <person name="McDonald S."/>
            <person name="McLean J."/>
            <person name="Mooney P."/>
            <person name="Moule S."/>
            <person name="Mungall K.L."/>
            <person name="Murphy L.D."/>
            <person name="Niblett D."/>
            <person name="Odell C."/>
            <person name="Oliver K."/>
            <person name="O'Neil S."/>
            <person name="Pearson D."/>
            <person name="Quail M.A."/>
            <person name="Rabbinowitsch E."/>
            <person name="Rutherford K.M."/>
            <person name="Rutter S."/>
            <person name="Saunders D."/>
            <person name="Seeger K."/>
            <person name="Sharp S."/>
            <person name="Skelton J."/>
            <person name="Simmonds M.N."/>
            <person name="Squares R."/>
            <person name="Squares S."/>
            <person name="Stevens K."/>
            <person name="Taylor K."/>
            <person name="Taylor R.G."/>
            <person name="Tivey A."/>
            <person name="Walsh S.V."/>
            <person name="Warren T."/>
            <person name="Whitehead S."/>
            <person name="Woodward J.R."/>
            <person name="Volckaert G."/>
            <person name="Aert R."/>
            <person name="Robben J."/>
            <person name="Grymonprez B."/>
            <person name="Weltjens I."/>
            <person name="Vanstreels E."/>
            <person name="Rieger M."/>
            <person name="Schaefer M."/>
            <person name="Mueller-Auer S."/>
            <person name="Gabel C."/>
            <person name="Fuchs M."/>
            <person name="Duesterhoeft A."/>
            <person name="Fritzc C."/>
            <person name="Holzer E."/>
            <person name="Moestl D."/>
            <person name="Hilbert H."/>
            <person name="Borzym K."/>
            <person name="Langer I."/>
            <person name="Beck A."/>
            <person name="Lehrach H."/>
            <person name="Reinhardt R."/>
            <person name="Pohl T.M."/>
            <person name="Eger P."/>
            <person name="Zimmermann W."/>
            <person name="Wedler H."/>
            <person name="Wambutt R."/>
            <person name="Purnelle B."/>
            <person name="Goffeau A."/>
            <person name="Cadieu E."/>
            <person name="Dreano S."/>
            <person name="Gloux S."/>
            <person name="Lelaure V."/>
            <person name="Mottier S."/>
            <person name="Galibert F."/>
            <person name="Aves S.J."/>
            <person name="Xiang Z."/>
            <person name="Hunt C."/>
            <person name="Moore K."/>
            <person name="Hurst S.M."/>
            <person name="Lucas M."/>
            <person name="Rochet M."/>
            <person name="Gaillardin C."/>
            <person name="Tallada V.A."/>
            <person name="Garzon A."/>
            <person name="Thode G."/>
            <person name="Daga R.R."/>
            <person name="Cruzado L."/>
            <person name="Jimenez J."/>
            <person name="Sanchez M."/>
            <person name="del Rey F."/>
            <person name="Benito J."/>
            <person name="Dominguez A."/>
            <person name="Revuelta J.L."/>
            <person name="Moreno S."/>
            <person name="Armstrong J."/>
            <person name="Forsburg S.L."/>
            <person name="Cerutti L."/>
            <person name="Lowe T."/>
            <person name="McCombie W.R."/>
            <person name="Paulsen I."/>
            <person name="Potashkin J."/>
            <person name="Shpakovski G.V."/>
            <person name="Ussery D."/>
            <person name="Barrell B.G."/>
            <person name="Nurse P."/>
        </authorList>
    </citation>
    <scope>NUCLEOTIDE SEQUENCE [LARGE SCALE GENOMIC DNA]</scope>
    <source>
        <strain>972 / ATCC 24843</strain>
    </source>
</reference>
<reference evidence="7" key="2">
    <citation type="journal article" date="2006" name="Nat. Biotechnol.">
        <title>ORFeome cloning and global analysis of protein localization in the fission yeast Schizosaccharomyces pombe.</title>
        <authorList>
            <person name="Matsuyama A."/>
            <person name="Arai R."/>
            <person name="Yashiroda Y."/>
            <person name="Shirai A."/>
            <person name="Kamata A."/>
            <person name="Sekido S."/>
            <person name="Kobayashi Y."/>
            <person name="Hashimoto A."/>
            <person name="Hamamoto M."/>
            <person name="Hiraoka Y."/>
            <person name="Horinouchi S."/>
            <person name="Yoshida M."/>
        </authorList>
    </citation>
    <scope>SUBCELLULAR LOCATION [LARGE SCALE ANALYSIS]</scope>
</reference>
<reference key="3">
    <citation type="journal article" date="2018" name="Proc. Natl. Acad. Sci. U.S.A.">
        <title>General amino acid control in fission yeast is regulated by a nonconserved transcription factor, with functions analogous to Gcn4/Atf4.</title>
        <authorList>
            <person name="Duncan C.D.S."/>
            <person name="Rodriguez-Lopez M."/>
            <person name="Ruis P."/>
            <person name="Baehler J."/>
            <person name="Mata J."/>
        </authorList>
    </citation>
    <scope>FUNCTION</scope>
    <scope>SUBCELLULAR LOCATION</scope>
    <scope>INDUCTION</scope>
    <scope>DISRUPTION PHENOTYPE</scope>
</reference>
<gene>
    <name evidence="6 10" type="primary">fil1</name>
    <name evidence="10" type="ORF">SPCC1393.08</name>
</gene>
<accession>O94720</accession>
<protein>
    <recommendedName>
        <fullName evidence="6">Transcription factor fil1</fullName>
    </recommendedName>
    <alternativeName>
        <fullName>GATA zinc finger domain-containing protein C1393.08</fullName>
    </alternativeName>
    <alternativeName>
        <fullName evidence="6">GCN four induction-like protein</fullName>
    </alternativeName>
    <alternativeName>
        <fullName evidence="7">General control transcription factor fil1</fullName>
    </alternativeName>
</protein>
<feature type="chain" id="PRO_0000310832" description="Transcription factor fil1">
    <location>
        <begin position="1"/>
        <end position="557"/>
    </location>
</feature>
<feature type="zinc finger region" description="GATA-type 1" evidence="2">
    <location>
        <begin position="365"/>
        <end position="390"/>
    </location>
</feature>
<feature type="zinc finger region" description="GATA-type 2" evidence="2">
    <location>
        <begin position="419"/>
        <end position="443"/>
    </location>
</feature>
<feature type="region of interest" description="Disordered" evidence="3">
    <location>
        <begin position="234"/>
        <end position="258"/>
    </location>
</feature>
<feature type="compositionally biased region" description="Low complexity" evidence="3">
    <location>
        <begin position="243"/>
        <end position="258"/>
    </location>
</feature>
<organism>
    <name type="scientific">Schizosaccharomyces pombe (strain 972 / ATCC 24843)</name>
    <name type="common">Fission yeast</name>
    <dbReference type="NCBI Taxonomy" id="284812"/>
    <lineage>
        <taxon>Eukaryota</taxon>
        <taxon>Fungi</taxon>
        <taxon>Dikarya</taxon>
        <taxon>Ascomycota</taxon>
        <taxon>Taphrinomycotina</taxon>
        <taxon>Schizosaccharomycetes</taxon>
        <taxon>Schizosaccharomycetales</taxon>
        <taxon>Schizosaccharomycetaceae</taxon>
        <taxon>Schizosaccharomyces</taxon>
    </lineage>
</organism>